<gene>
    <name evidence="1" type="primary">kup</name>
    <name type="ordered locus">YE0007</name>
</gene>
<reference key="1">
    <citation type="journal article" date="2006" name="PLoS Genet.">
        <title>The complete genome sequence and comparative genome analysis of the high pathogenicity Yersinia enterocolitica strain 8081.</title>
        <authorList>
            <person name="Thomson N.R."/>
            <person name="Howard S."/>
            <person name="Wren B.W."/>
            <person name="Holden M.T.G."/>
            <person name="Crossman L."/>
            <person name="Challis G.L."/>
            <person name="Churcher C."/>
            <person name="Mungall K."/>
            <person name="Brooks K."/>
            <person name="Chillingworth T."/>
            <person name="Feltwell T."/>
            <person name="Abdellah Z."/>
            <person name="Hauser H."/>
            <person name="Jagels K."/>
            <person name="Maddison M."/>
            <person name="Moule S."/>
            <person name="Sanders M."/>
            <person name="Whitehead S."/>
            <person name="Quail M.A."/>
            <person name="Dougan G."/>
            <person name="Parkhill J."/>
            <person name="Prentice M.B."/>
        </authorList>
    </citation>
    <scope>NUCLEOTIDE SEQUENCE [LARGE SCALE GENOMIC DNA]</scope>
    <source>
        <strain>NCTC 13174 / 8081</strain>
    </source>
</reference>
<comment type="function">
    <text evidence="1">Responsible for the low-affinity transport of potassium into the cell. Likely operates as a K(+):H(+) symporter.</text>
</comment>
<comment type="catalytic activity">
    <reaction evidence="1">
        <text>K(+)(in) + H(+)(in) = K(+)(out) + H(+)(out)</text>
        <dbReference type="Rhea" id="RHEA:28490"/>
        <dbReference type="ChEBI" id="CHEBI:15378"/>
        <dbReference type="ChEBI" id="CHEBI:29103"/>
    </reaction>
    <physiologicalReaction direction="right-to-left" evidence="1">
        <dbReference type="Rhea" id="RHEA:28492"/>
    </physiologicalReaction>
</comment>
<comment type="subcellular location">
    <subcellularLocation>
        <location evidence="1">Cell inner membrane</location>
        <topology evidence="1">Multi-pass membrane protein</topology>
    </subcellularLocation>
</comment>
<comment type="similarity">
    <text evidence="1">Belongs to the HAK/KUP transporter (TC 2.A.72) family.</text>
</comment>
<comment type="sequence caution" evidence="2">
    <conflict type="erroneous initiation">
        <sequence resource="EMBL-CDS" id="CAL10152"/>
    </conflict>
</comment>
<accession>A1JHR6</accession>
<organism>
    <name type="scientific">Yersinia enterocolitica serotype O:8 / biotype 1B (strain NCTC 13174 / 8081)</name>
    <dbReference type="NCBI Taxonomy" id="393305"/>
    <lineage>
        <taxon>Bacteria</taxon>
        <taxon>Pseudomonadati</taxon>
        <taxon>Pseudomonadota</taxon>
        <taxon>Gammaproteobacteria</taxon>
        <taxon>Enterobacterales</taxon>
        <taxon>Yersiniaceae</taxon>
        <taxon>Yersinia</taxon>
    </lineage>
</organism>
<name>KUP_YERE8</name>
<dbReference type="EMBL" id="AM286415">
    <property type="protein sequence ID" value="CAL10152.1"/>
    <property type="status" value="ALT_INIT"/>
    <property type="molecule type" value="Genomic_DNA"/>
</dbReference>
<dbReference type="RefSeq" id="WP_005175182.1">
    <property type="nucleotide sequence ID" value="NC_008800.1"/>
</dbReference>
<dbReference type="RefSeq" id="YP_001004404.1">
    <property type="nucleotide sequence ID" value="NC_008800.1"/>
</dbReference>
<dbReference type="KEGG" id="yen:YE0007"/>
<dbReference type="PATRIC" id="fig|393305.7.peg.96"/>
<dbReference type="eggNOG" id="COG3158">
    <property type="taxonomic scope" value="Bacteria"/>
</dbReference>
<dbReference type="HOGENOM" id="CLU_008142_4_2_6"/>
<dbReference type="OrthoDB" id="9805577at2"/>
<dbReference type="Proteomes" id="UP000000642">
    <property type="component" value="Chromosome"/>
</dbReference>
<dbReference type="GO" id="GO:0005886">
    <property type="term" value="C:plasma membrane"/>
    <property type="evidence" value="ECO:0007669"/>
    <property type="project" value="UniProtKB-SubCell"/>
</dbReference>
<dbReference type="GO" id="GO:0015079">
    <property type="term" value="F:potassium ion transmembrane transporter activity"/>
    <property type="evidence" value="ECO:0007669"/>
    <property type="project" value="UniProtKB-UniRule"/>
</dbReference>
<dbReference type="GO" id="GO:0015293">
    <property type="term" value="F:symporter activity"/>
    <property type="evidence" value="ECO:0007669"/>
    <property type="project" value="UniProtKB-UniRule"/>
</dbReference>
<dbReference type="HAMAP" id="MF_01522">
    <property type="entry name" value="Kup"/>
    <property type="match status" value="1"/>
</dbReference>
<dbReference type="InterPro" id="IPR003855">
    <property type="entry name" value="K+_transporter"/>
</dbReference>
<dbReference type="InterPro" id="IPR053952">
    <property type="entry name" value="K_trans_C"/>
</dbReference>
<dbReference type="InterPro" id="IPR053951">
    <property type="entry name" value="K_trans_N"/>
</dbReference>
<dbReference type="InterPro" id="IPR023051">
    <property type="entry name" value="Kup"/>
</dbReference>
<dbReference type="NCBIfam" id="TIGR00794">
    <property type="entry name" value="kup"/>
    <property type="match status" value="1"/>
</dbReference>
<dbReference type="NCBIfam" id="NF008015">
    <property type="entry name" value="PRK10745.1"/>
    <property type="match status" value="1"/>
</dbReference>
<dbReference type="PANTHER" id="PTHR30540:SF79">
    <property type="entry name" value="LOW AFFINITY POTASSIUM TRANSPORT SYSTEM PROTEIN KUP"/>
    <property type="match status" value="1"/>
</dbReference>
<dbReference type="PANTHER" id="PTHR30540">
    <property type="entry name" value="OSMOTIC STRESS POTASSIUM TRANSPORTER"/>
    <property type="match status" value="1"/>
</dbReference>
<dbReference type="Pfam" id="PF02705">
    <property type="entry name" value="K_trans"/>
    <property type="match status" value="1"/>
</dbReference>
<dbReference type="Pfam" id="PF22776">
    <property type="entry name" value="K_trans_C"/>
    <property type="match status" value="1"/>
</dbReference>
<evidence type="ECO:0000255" key="1">
    <source>
        <dbReference type="HAMAP-Rule" id="MF_01522"/>
    </source>
</evidence>
<evidence type="ECO:0000305" key="2"/>
<proteinExistence type="inferred from homology"/>
<feature type="chain" id="PRO_0000292621" description="Low affinity potassium transport system protein Kup">
    <location>
        <begin position="1"/>
        <end position="623"/>
    </location>
</feature>
<feature type="transmembrane region" description="Helical" evidence="1">
    <location>
        <begin position="10"/>
        <end position="30"/>
    </location>
</feature>
<feature type="transmembrane region" description="Helical" evidence="1">
    <location>
        <begin position="47"/>
        <end position="67"/>
    </location>
</feature>
<feature type="transmembrane region" description="Helical" evidence="1">
    <location>
        <begin position="102"/>
        <end position="122"/>
    </location>
</feature>
<feature type="transmembrane region" description="Helical" evidence="1">
    <location>
        <begin position="138"/>
        <end position="158"/>
    </location>
</feature>
<feature type="transmembrane region" description="Helical" evidence="1">
    <location>
        <begin position="166"/>
        <end position="186"/>
    </location>
</feature>
<feature type="transmembrane region" description="Helical" evidence="1">
    <location>
        <begin position="214"/>
        <end position="234"/>
    </location>
</feature>
<feature type="transmembrane region" description="Helical" evidence="1">
    <location>
        <begin position="248"/>
        <end position="268"/>
    </location>
</feature>
<feature type="transmembrane region" description="Helical" evidence="1">
    <location>
        <begin position="277"/>
        <end position="297"/>
    </location>
</feature>
<feature type="transmembrane region" description="Helical" evidence="1">
    <location>
        <begin position="338"/>
        <end position="358"/>
    </location>
</feature>
<feature type="transmembrane region" description="Helical" evidence="1">
    <location>
        <begin position="364"/>
        <end position="384"/>
    </location>
</feature>
<feature type="transmembrane region" description="Helical" evidence="1">
    <location>
        <begin position="396"/>
        <end position="416"/>
    </location>
</feature>
<feature type="transmembrane region" description="Helical" evidence="1">
    <location>
        <begin position="420"/>
        <end position="440"/>
    </location>
</feature>
<sequence length="623" mass="68987">MSTEHKKQSLSAVTLAAIGVVYGDIGTSPLYTLRECFSGHYGFDVRPDVVFGFLSLIFWMLILIVSVKYLTYVMRADNAGEGGILTLMSLAGRNTSSRATSILVILGLIGGSFFYGEVVITPAISVMSAIEGLEIAAPALDPYIVPCSIAVLTLLFVIQKHGTGSVGKLFAPVMLVWFLTLALLGLRSIIANPEVLAALNPKWAISFFTEYKSVSFFALGAVVLAITGVEALYADMGHFGKFPIRLAWFTVVLPSLVLNYFGQGALLLKNPEAIKNPFFLLAPDWALIPLLILATLATVIASQAVISGVFSLTRQAVRLGYLPPMRIIHTSEMESGQIYIPVINWTLYLAVVLVIVGFERSSNLAAAYGIAVTGTMVITSVLFCTVALKNWHWNRFFVYFLLVALLVIDVPMFSANALKLFSGGWLPLSLGLVMFIIMTTWKSERFSLLRRMHEHGNSLEAMIASLEKSPPVRVPGTAVYMSRAMNVIPFALLHNLKHNKVLHDRVVLLTLRTEDAPYVHNVNRVTIEQLSPTFWRVVASYGWRETPNVEEIFHRCGLEGLPCQMMETSFFMSHESLILTKRPWYLFLRGKLFIALSRNALRAADQFEIPPNRVIELGTQVEI</sequence>
<protein>
    <recommendedName>
        <fullName evidence="1">Low affinity potassium transport system protein Kup</fullName>
    </recommendedName>
    <alternativeName>
        <fullName evidence="1">Kup system potassium uptake protein</fullName>
    </alternativeName>
</protein>
<keyword id="KW-0997">Cell inner membrane</keyword>
<keyword id="KW-1003">Cell membrane</keyword>
<keyword id="KW-0406">Ion transport</keyword>
<keyword id="KW-0472">Membrane</keyword>
<keyword id="KW-0630">Potassium</keyword>
<keyword id="KW-0633">Potassium transport</keyword>
<keyword id="KW-0769">Symport</keyword>
<keyword id="KW-0812">Transmembrane</keyword>
<keyword id="KW-1133">Transmembrane helix</keyword>
<keyword id="KW-0813">Transport</keyword>